<name>NUOCD_RHOPB</name>
<dbReference type="EC" id="7.1.1.-" evidence="1"/>
<dbReference type="EMBL" id="CP000301">
    <property type="protein sequence ID" value="ABD89595.1"/>
    <property type="molecule type" value="Genomic_DNA"/>
</dbReference>
<dbReference type="SMR" id="Q20Z41"/>
<dbReference type="STRING" id="316056.RPC_4069"/>
<dbReference type="KEGG" id="rpc:RPC_4069"/>
<dbReference type="eggNOG" id="COG0649">
    <property type="taxonomic scope" value="Bacteria"/>
</dbReference>
<dbReference type="eggNOG" id="COG0852">
    <property type="taxonomic scope" value="Bacteria"/>
</dbReference>
<dbReference type="HOGENOM" id="CLU_015134_3_2_5"/>
<dbReference type="OrthoDB" id="9801496at2"/>
<dbReference type="GO" id="GO:0030964">
    <property type="term" value="C:NADH dehydrogenase complex"/>
    <property type="evidence" value="ECO:0007669"/>
    <property type="project" value="InterPro"/>
</dbReference>
<dbReference type="GO" id="GO:0005886">
    <property type="term" value="C:plasma membrane"/>
    <property type="evidence" value="ECO:0007669"/>
    <property type="project" value="UniProtKB-SubCell"/>
</dbReference>
<dbReference type="GO" id="GO:0051287">
    <property type="term" value="F:NAD binding"/>
    <property type="evidence" value="ECO:0007669"/>
    <property type="project" value="InterPro"/>
</dbReference>
<dbReference type="GO" id="GO:0008137">
    <property type="term" value="F:NADH dehydrogenase (ubiquinone) activity"/>
    <property type="evidence" value="ECO:0007669"/>
    <property type="project" value="InterPro"/>
</dbReference>
<dbReference type="GO" id="GO:0050136">
    <property type="term" value="F:NADH:ubiquinone reductase (non-electrogenic) activity"/>
    <property type="evidence" value="ECO:0007669"/>
    <property type="project" value="UniProtKB-UniRule"/>
</dbReference>
<dbReference type="GO" id="GO:0048038">
    <property type="term" value="F:quinone binding"/>
    <property type="evidence" value="ECO:0007669"/>
    <property type="project" value="UniProtKB-KW"/>
</dbReference>
<dbReference type="Gene3D" id="1.10.645.10">
    <property type="entry name" value="Cytochrome-c3 Hydrogenase, chain B"/>
    <property type="match status" value="1"/>
</dbReference>
<dbReference type="Gene3D" id="3.30.460.80">
    <property type="entry name" value="NADH:ubiquinone oxidoreductase, 30kDa subunit"/>
    <property type="match status" value="1"/>
</dbReference>
<dbReference type="HAMAP" id="MF_01359">
    <property type="entry name" value="NDH1_NuoCD_1"/>
    <property type="match status" value="1"/>
</dbReference>
<dbReference type="HAMAP" id="MF_01358">
    <property type="entry name" value="NDH1_NuoD"/>
    <property type="match status" value="1"/>
</dbReference>
<dbReference type="InterPro" id="IPR023062">
    <property type="entry name" value="NADH_DH_suCD"/>
</dbReference>
<dbReference type="InterPro" id="IPR001135">
    <property type="entry name" value="NADH_Q_OxRdtase_suD"/>
</dbReference>
<dbReference type="InterPro" id="IPR037232">
    <property type="entry name" value="NADH_quin_OxRdtase_su_C/D-like"/>
</dbReference>
<dbReference type="InterPro" id="IPR001268">
    <property type="entry name" value="NADH_UbQ_OxRdtase_30kDa_su"/>
</dbReference>
<dbReference type="InterPro" id="IPR014029">
    <property type="entry name" value="NADH_UbQ_OxRdtase_49kDa_CS"/>
</dbReference>
<dbReference type="InterPro" id="IPR022885">
    <property type="entry name" value="NDH1_su_D/H"/>
</dbReference>
<dbReference type="InterPro" id="IPR029014">
    <property type="entry name" value="NiFe-Hase_large"/>
</dbReference>
<dbReference type="NCBIfam" id="TIGR01962">
    <property type="entry name" value="NuoD"/>
    <property type="match status" value="1"/>
</dbReference>
<dbReference type="NCBIfam" id="NF004739">
    <property type="entry name" value="PRK06075.1"/>
    <property type="match status" value="1"/>
</dbReference>
<dbReference type="NCBIfam" id="NF008728">
    <property type="entry name" value="PRK11742.1"/>
    <property type="match status" value="1"/>
</dbReference>
<dbReference type="PANTHER" id="PTHR11993:SF45">
    <property type="entry name" value="NADH-QUINONE OXIDOREDUCTASE SUBUNIT C_D"/>
    <property type="match status" value="1"/>
</dbReference>
<dbReference type="PANTHER" id="PTHR11993">
    <property type="entry name" value="NADH-UBIQUINONE OXIDOREDUCTASE 49 KDA SUBUNIT"/>
    <property type="match status" value="1"/>
</dbReference>
<dbReference type="Pfam" id="PF00329">
    <property type="entry name" value="Complex1_30kDa"/>
    <property type="match status" value="1"/>
</dbReference>
<dbReference type="Pfam" id="PF00346">
    <property type="entry name" value="Complex1_49kDa"/>
    <property type="match status" value="1"/>
</dbReference>
<dbReference type="SUPFAM" id="SSF56762">
    <property type="entry name" value="HydB/Nqo4-like"/>
    <property type="match status" value="1"/>
</dbReference>
<dbReference type="SUPFAM" id="SSF143243">
    <property type="entry name" value="Nqo5-like"/>
    <property type="match status" value="1"/>
</dbReference>
<dbReference type="PROSITE" id="PS00535">
    <property type="entry name" value="COMPLEX1_49K"/>
    <property type="match status" value="1"/>
</dbReference>
<feature type="chain" id="PRO_0000358676" description="NADH-quinone oxidoreductase subunit C/D">
    <location>
        <begin position="1"/>
        <end position="581"/>
    </location>
</feature>
<feature type="region of interest" description="NADH dehydrogenase I subunit C" evidence="1">
    <location>
        <begin position="1"/>
        <end position="172"/>
    </location>
</feature>
<feature type="region of interest" description="NADH dehydrogenase I subunit D" evidence="1">
    <location>
        <begin position="196"/>
        <end position="581"/>
    </location>
</feature>
<comment type="function">
    <text evidence="1">NDH-1 shuttles electrons from NADH, via FMN and iron-sulfur (Fe-S) centers, to quinones in the respiratory chain. The immediate electron acceptor for the enzyme in this species is believed to be ubiquinone. Couples the redox reaction to proton translocation (for every two electrons transferred, four hydrogen ions are translocated across the cytoplasmic membrane), and thus conserves the redox energy in a proton gradient.</text>
</comment>
<comment type="catalytic activity">
    <reaction evidence="1">
        <text>a quinone + NADH + 5 H(+)(in) = a quinol + NAD(+) + 4 H(+)(out)</text>
        <dbReference type="Rhea" id="RHEA:57888"/>
        <dbReference type="ChEBI" id="CHEBI:15378"/>
        <dbReference type="ChEBI" id="CHEBI:24646"/>
        <dbReference type="ChEBI" id="CHEBI:57540"/>
        <dbReference type="ChEBI" id="CHEBI:57945"/>
        <dbReference type="ChEBI" id="CHEBI:132124"/>
    </reaction>
</comment>
<comment type="subunit">
    <text evidence="1">NDH-1 is composed of 13 different subunits. Subunits NuoB, CD, E, F, and G constitute the peripheral sector of the complex.</text>
</comment>
<comment type="subcellular location">
    <subcellularLocation>
        <location evidence="1">Cell inner membrane</location>
        <topology evidence="1">Peripheral membrane protein</topology>
        <orientation evidence="1">Cytoplasmic side</orientation>
    </subcellularLocation>
</comment>
<comment type="similarity">
    <text evidence="1">In the N-terminal section; belongs to the complex I 30 kDa subunit family.</text>
</comment>
<comment type="similarity">
    <text evidence="1">In the C-terminal section; belongs to the complex I 49 kDa subunit family.</text>
</comment>
<evidence type="ECO:0000255" key="1">
    <source>
        <dbReference type="HAMAP-Rule" id="MF_01359"/>
    </source>
</evidence>
<gene>
    <name evidence="1" type="primary">nuoC</name>
    <name evidence="1" type="synonym">nuoCD</name>
    <name evidence="1" type="synonym">nuoD</name>
    <name type="ordered locus">RPC_4069</name>
</gene>
<protein>
    <recommendedName>
        <fullName evidence="1">NADH-quinone oxidoreductase subunit C/D</fullName>
        <ecNumber evidence="1">7.1.1.-</ecNumber>
    </recommendedName>
    <alternativeName>
        <fullName evidence="1">NADH dehydrogenase I subunit C/D</fullName>
    </alternativeName>
    <alternativeName>
        <fullName evidence="1">NDH-1 subunit C/D</fullName>
    </alternativeName>
</protein>
<proteinExistence type="inferred from homology"/>
<sequence length="581" mass="65637">MSAVELVNELSARFGEAVFGEQPTHDAFPTLWIKPEAMPALHRYLKHEIERPFPLLVDLWAIDETARHHREGQPPSGVTIASHLMSLERNADIRLKCALPADDPRAHTIAEIYPNADWYEREAFDMFGVHFEGRRDHRRILMPPLWDGHPMRKDQPARATERPPFVMTAARFDAEEQALAVDPEALGLPTQRDGVELMILNYGPHSMATHGVFRIVLALDGEEIVAARPDIGFHHRGAEKMGERQSWHQYIPYTDRIDYLGGVMGEMPYLQAVERLCGIAVPERAQTVRIMLCEIFRIMNHLLFYGTLAQDTGAMSPVFYMFTDRERGYRVIEAITGARMHPGWFRIGGLAADLPEGWDALVRDFLDWMPARLDDYEGMVMRNEIFRARTVGIAAYDTATAFDWGITGPGLRATGCGWDMRKARPYGGYQNFEFEVPTGHRGDCYDRARVRVDEIRQSLRIIRQCLDHMPAGPIKADHPLTTPPPRERMLHDIETMIHHFVGSSWGPVVPVGEATGQVESVRGLTQYAVVSDGETTAYRTRIRTPSFAHLQSIATIAPGLTVADLVAYLGSIDYVMSDVDR</sequence>
<organism>
    <name type="scientific">Rhodopseudomonas palustris (strain BisB18)</name>
    <dbReference type="NCBI Taxonomy" id="316056"/>
    <lineage>
        <taxon>Bacteria</taxon>
        <taxon>Pseudomonadati</taxon>
        <taxon>Pseudomonadota</taxon>
        <taxon>Alphaproteobacteria</taxon>
        <taxon>Hyphomicrobiales</taxon>
        <taxon>Nitrobacteraceae</taxon>
        <taxon>Rhodopseudomonas</taxon>
    </lineage>
</organism>
<reference key="1">
    <citation type="submission" date="2006-03" db="EMBL/GenBank/DDBJ databases">
        <title>Complete sequence of Rhodopseudomonas palustris BisB18.</title>
        <authorList>
            <consortium name="US DOE Joint Genome Institute"/>
            <person name="Copeland A."/>
            <person name="Lucas S."/>
            <person name="Lapidus A."/>
            <person name="Barry K."/>
            <person name="Detter J.C."/>
            <person name="Glavina del Rio T."/>
            <person name="Hammon N."/>
            <person name="Israni S."/>
            <person name="Dalin E."/>
            <person name="Tice H."/>
            <person name="Pitluck S."/>
            <person name="Chain P."/>
            <person name="Malfatti S."/>
            <person name="Shin M."/>
            <person name="Vergez L."/>
            <person name="Schmutz J."/>
            <person name="Larimer F."/>
            <person name="Land M."/>
            <person name="Hauser L."/>
            <person name="Pelletier D.A."/>
            <person name="Kyrpides N."/>
            <person name="Anderson I."/>
            <person name="Oda Y."/>
            <person name="Harwood C.S."/>
            <person name="Richardson P."/>
        </authorList>
    </citation>
    <scope>NUCLEOTIDE SEQUENCE [LARGE SCALE GENOMIC DNA]</scope>
    <source>
        <strain>BisB18</strain>
    </source>
</reference>
<accession>Q20Z41</accession>
<keyword id="KW-0997">Cell inner membrane</keyword>
<keyword id="KW-1003">Cell membrane</keyword>
<keyword id="KW-0472">Membrane</keyword>
<keyword id="KW-0511">Multifunctional enzyme</keyword>
<keyword id="KW-0520">NAD</keyword>
<keyword id="KW-0874">Quinone</keyword>
<keyword id="KW-1278">Translocase</keyword>
<keyword id="KW-0813">Transport</keyword>
<keyword id="KW-0830">Ubiquinone</keyword>